<feature type="chain" id="PRO_0000173444" description="Uncharacterized transporter mfs2">
    <location>
        <begin position="1"/>
        <end position="546"/>
    </location>
</feature>
<feature type="transmembrane region" description="Helical" evidence="1">
    <location>
        <begin position="106"/>
        <end position="126"/>
    </location>
</feature>
<feature type="transmembrane region" description="Helical" evidence="1">
    <location>
        <begin position="145"/>
        <end position="165"/>
    </location>
</feature>
<feature type="transmembrane region" description="Helical" evidence="1">
    <location>
        <begin position="172"/>
        <end position="192"/>
    </location>
</feature>
<feature type="transmembrane region" description="Helical" evidence="1">
    <location>
        <begin position="231"/>
        <end position="251"/>
    </location>
</feature>
<feature type="transmembrane region" description="Helical" evidence="1">
    <location>
        <begin position="263"/>
        <end position="283"/>
    </location>
</feature>
<feature type="transmembrane region" description="Helical" evidence="1">
    <location>
        <begin position="332"/>
        <end position="352"/>
    </location>
</feature>
<feature type="transmembrane region" description="Helical" evidence="1">
    <location>
        <begin position="375"/>
        <end position="395"/>
    </location>
</feature>
<feature type="transmembrane region" description="Helical" evidence="1">
    <location>
        <begin position="416"/>
        <end position="436"/>
    </location>
</feature>
<feature type="transmembrane region" description="Helical" evidence="1">
    <location>
        <begin position="444"/>
        <end position="464"/>
    </location>
</feature>
<feature type="transmembrane region" description="Helical" evidence="1">
    <location>
        <begin position="510"/>
        <end position="530"/>
    </location>
</feature>
<evidence type="ECO:0000255" key="1"/>
<evidence type="ECO:0000269" key="2">
    <source>
    </source>
</evidence>
<evidence type="ECO:0000305" key="3"/>
<comment type="subcellular location">
    <subcellularLocation>
        <location evidence="2">Endoplasmic reticulum membrane</location>
        <topology evidence="2">Multi-pass membrane protein</topology>
    </subcellularLocation>
</comment>
<comment type="similarity">
    <text evidence="3">Belongs to the major facilitator superfamily. CAR1 family.</text>
</comment>
<sequence>MDLLSLITGKKFEKHYSKVGSRFSDESLNGLEKQLSNGADAAIDTTADDRGSVVSLGASLPLSQGRPAKSKNILNDTLLAEDQYLVTWDGPDDPLNPRNWSHSYKWWIVIQVSVITIVVTFASSVYSSGIIDIASELHSSIPVSTLGSCTFLVGFGVGSLPFAPLSDIYGRFIIYFVTLLIFTIFQVGGGCAHNVWTLAIVRFFQGVFGSTPLANAGGTISDLFTPVQRTYVLPGFCTFPYLGPIIGPIIGDFITQSYLEWRWTFWINMIWAAAVIVFVFIFFPETHEDTILDYKAKYLRKTTGNTAYYTIHERERDPKNAMIQAATQAVSLIFTEPIVVCFTLYLTVVYIINYINFEGYPIVFAKYGFNKGEQGLSFIGVGVGIVCAGLCTPFIYWHYLKVNKKRNGVICPEDRLYPLFIGCFLLPISMFWFAWTCYPHHIHWIVPIIASAFFGFSLLIVFFVSYNYIIDSYQHMAPSALAAATLVRYSASGGISMVARPMYLNLGDHWATSVLGFISVAMVPIPFIFYRFGKSIRAWSKNAYKL</sequence>
<accession>Q10084</accession>
<dbReference type="EMBL" id="CU329670">
    <property type="protein sequence ID" value="CAA92306.1"/>
    <property type="molecule type" value="Genomic_DNA"/>
</dbReference>
<dbReference type="PIR" id="T37516">
    <property type="entry name" value="T37516"/>
</dbReference>
<dbReference type="RefSeq" id="NP_592802.1">
    <property type="nucleotide sequence ID" value="NM_001018202.2"/>
</dbReference>
<dbReference type="BioGRID" id="279429">
    <property type="interactions" value="2"/>
</dbReference>
<dbReference type="FunCoup" id="Q10084">
    <property type="interactions" value="8"/>
</dbReference>
<dbReference type="iPTMnet" id="Q10084"/>
<dbReference type="PaxDb" id="4896-SPAC11D3.05.1"/>
<dbReference type="EnsemblFungi" id="SPAC11D3.05.1">
    <property type="protein sequence ID" value="SPAC11D3.05.1:pep"/>
    <property type="gene ID" value="SPAC11D3.05"/>
</dbReference>
<dbReference type="GeneID" id="2542991"/>
<dbReference type="KEGG" id="spo:2542991"/>
<dbReference type="PomBase" id="SPAC11D3.05">
    <property type="gene designation" value="mfs2"/>
</dbReference>
<dbReference type="VEuPathDB" id="FungiDB:SPAC11D3.05"/>
<dbReference type="eggNOG" id="KOG0255">
    <property type="taxonomic scope" value="Eukaryota"/>
</dbReference>
<dbReference type="HOGENOM" id="CLU_008455_11_6_1"/>
<dbReference type="InParanoid" id="Q10084"/>
<dbReference type="OMA" id="FCTFPYL"/>
<dbReference type="PhylomeDB" id="Q10084"/>
<dbReference type="PRO" id="PR:Q10084"/>
<dbReference type="Proteomes" id="UP000002485">
    <property type="component" value="Chromosome I"/>
</dbReference>
<dbReference type="GO" id="GO:0005783">
    <property type="term" value="C:endoplasmic reticulum"/>
    <property type="evidence" value="ECO:0007005"/>
    <property type="project" value="PomBase"/>
</dbReference>
<dbReference type="GO" id="GO:0005789">
    <property type="term" value="C:endoplasmic reticulum membrane"/>
    <property type="evidence" value="ECO:0007669"/>
    <property type="project" value="UniProtKB-SubCell"/>
</dbReference>
<dbReference type="GO" id="GO:0005886">
    <property type="term" value="C:plasma membrane"/>
    <property type="evidence" value="ECO:0000318"/>
    <property type="project" value="GO_Central"/>
</dbReference>
<dbReference type="GO" id="GO:0022857">
    <property type="term" value="F:transmembrane transporter activity"/>
    <property type="evidence" value="ECO:0000318"/>
    <property type="project" value="GO_Central"/>
</dbReference>
<dbReference type="GO" id="GO:0055085">
    <property type="term" value="P:transmembrane transport"/>
    <property type="evidence" value="ECO:0000318"/>
    <property type="project" value="GO_Central"/>
</dbReference>
<dbReference type="CDD" id="cd17323">
    <property type="entry name" value="MFS_Tpo1_MDR_like"/>
    <property type="match status" value="1"/>
</dbReference>
<dbReference type="FunFam" id="1.20.1250.20:FF:000082">
    <property type="entry name" value="MFS multidrug transporter, putative"/>
    <property type="match status" value="1"/>
</dbReference>
<dbReference type="Gene3D" id="1.20.1250.20">
    <property type="entry name" value="MFS general substrate transporter like domains"/>
    <property type="match status" value="1"/>
</dbReference>
<dbReference type="InterPro" id="IPR011701">
    <property type="entry name" value="MFS"/>
</dbReference>
<dbReference type="InterPro" id="IPR020846">
    <property type="entry name" value="MFS_dom"/>
</dbReference>
<dbReference type="InterPro" id="IPR036259">
    <property type="entry name" value="MFS_trans_sf"/>
</dbReference>
<dbReference type="PANTHER" id="PTHR23502">
    <property type="entry name" value="MAJOR FACILITATOR SUPERFAMILY"/>
    <property type="match status" value="1"/>
</dbReference>
<dbReference type="PANTHER" id="PTHR23502:SF47">
    <property type="entry name" value="MAJOR FACILITATOR SUPERFAMILY (MFS) PROFILE DOMAIN-CONTAINING PROTEIN-RELATED"/>
    <property type="match status" value="1"/>
</dbReference>
<dbReference type="Pfam" id="PF07690">
    <property type="entry name" value="MFS_1"/>
    <property type="match status" value="1"/>
</dbReference>
<dbReference type="SUPFAM" id="SSF103473">
    <property type="entry name" value="MFS general substrate transporter"/>
    <property type="match status" value="1"/>
</dbReference>
<dbReference type="PROSITE" id="PS50850">
    <property type="entry name" value="MFS"/>
    <property type="match status" value="1"/>
</dbReference>
<gene>
    <name type="primary">mfs2</name>
    <name type="ORF">SPAC11D3.05</name>
</gene>
<proteinExistence type="inferred from homology"/>
<name>MFS2_SCHPO</name>
<protein>
    <recommendedName>
        <fullName>Uncharacterized transporter mfs2</fullName>
    </recommendedName>
</protein>
<organism>
    <name type="scientific">Schizosaccharomyces pombe (strain 972 / ATCC 24843)</name>
    <name type="common">Fission yeast</name>
    <dbReference type="NCBI Taxonomy" id="284812"/>
    <lineage>
        <taxon>Eukaryota</taxon>
        <taxon>Fungi</taxon>
        <taxon>Dikarya</taxon>
        <taxon>Ascomycota</taxon>
        <taxon>Taphrinomycotina</taxon>
        <taxon>Schizosaccharomycetes</taxon>
        <taxon>Schizosaccharomycetales</taxon>
        <taxon>Schizosaccharomycetaceae</taxon>
        <taxon>Schizosaccharomyces</taxon>
    </lineage>
</organism>
<keyword id="KW-0256">Endoplasmic reticulum</keyword>
<keyword id="KW-0472">Membrane</keyword>
<keyword id="KW-1185">Reference proteome</keyword>
<keyword id="KW-0812">Transmembrane</keyword>
<keyword id="KW-1133">Transmembrane helix</keyword>
<keyword id="KW-0813">Transport</keyword>
<reference key="1">
    <citation type="journal article" date="2002" name="Nature">
        <title>The genome sequence of Schizosaccharomyces pombe.</title>
        <authorList>
            <person name="Wood V."/>
            <person name="Gwilliam R."/>
            <person name="Rajandream M.A."/>
            <person name="Lyne M.H."/>
            <person name="Lyne R."/>
            <person name="Stewart A."/>
            <person name="Sgouros J.G."/>
            <person name="Peat N."/>
            <person name="Hayles J."/>
            <person name="Baker S.G."/>
            <person name="Basham D."/>
            <person name="Bowman S."/>
            <person name="Brooks K."/>
            <person name="Brown D."/>
            <person name="Brown S."/>
            <person name="Chillingworth T."/>
            <person name="Churcher C.M."/>
            <person name="Collins M."/>
            <person name="Connor R."/>
            <person name="Cronin A."/>
            <person name="Davis P."/>
            <person name="Feltwell T."/>
            <person name="Fraser A."/>
            <person name="Gentles S."/>
            <person name="Goble A."/>
            <person name="Hamlin N."/>
            <person name="Harris D.E."/>
            <person name="Hidalgo J."/>
            <person name="Hodgson G."/>
            <person name="Holroyd S."/>
            <person name="Hornsby T."/>
            <person name="Howarth S."/>
            <person name="Huckle E.J."/>
            <person name="Hunt S."/>
            <person name="Jagels K."/>
            <person name="James K.D."/>
            <person name="Jones L."/>
            <person name="Jones M."/>
            <person name="Leather S."/>
            <person name="McDonald S."/>
            <person name="McLean J."/>
            <person name="Mooney P."/>
            <person name="Moule S."/>
            <person name="Mungall K.L."/>
            <person name="Murphy L.D."/>
            <person name="Niblett D."/>
            <person name="Odell C."/>
            <person name="Oliver K."/>
            <person name="O'Neil S."/>
            <person name="Pearson D."/>
            <person name="Quail M.A."/>
            <person name="Rabbinowitsch E."/>
            <person name="Rutherford K.M."/>
            <person name="Rutter S."/>
            <person name="Saunders D."/>
            <person name="Seeger K."/>
            <person name="Sharp S."/>
            <person name="Skelton J."/>
            <person name="Simmonds M.N."/>
            <person name="Squares R."/>
            <person name="Squares S."/>
            <person name="Stevens K."/>
            <person name="Taylor K."/>
            <person name="Taylor R.G."/>
            <person name="Tivey A."/>
            <person name="Walsh S.V."/>
            <person name="Warren T."/>
            <person name="Whitehead S."/>
            <person name="Woodward J.R."/>
            <person name="Volckaert G."/>
            <person name="Aert R."/>
            <person name="Robben J."/>
            <person name="Grymonprez B."/>
            <person name="Weltjens I."/>
            <person name="Vanstreels E."/>
            <person name="Rieger M."/>
            <person name="Schaefer M."/>
            <person name="Mueller-Auer S."/>
            <person name="Gabel C."/>
            <person name="Fuchs M."/>
            <person name="Duesterhoeft A."/>
            <person name="Fritzc C."/>
            <person name="Holzer E."/>
            <person name="Moestl D."/>
            <person name="Hilbert H."/>
            <person name="Borzym K."/>
            <person name="Langer I."/>
            <person name="Beck A."/>
            <person name="Lehrach H."/>
            <person name="Reinhardt R."/>
            <person name="Pohl T.M."/>
            <person name="Eger P."/>
            <person name="Zimmermann W."/>
            <person name="Wedler H."/>
            <person name="Wambutt R."/>
            <person name="Purnelle B."/>
            <person name="Goffeau A."/>
            <person name="Cadieu E."/>
            <person name="Dreano S."/>
            <person name="Gloux S."/>
            <person name="Lelaure V."/>
            <person name="Mottier S."/>
            <person name="Galibert F."/>
            <person name="Aves S.J."/>
            <person name="Xiang Z."/>
            <person name="Hunt C."/>
            <person name="Moore K."/>
            <person name="Hurst S.M."/>
            <person name="Lucas M."/>
            <person name="Rochet M."/>
            <person name="Gaillardin C."/>
            <person name="Tallada V.A."/>
            <person name="Garzon A."/>
            <person name="Thode G."/>
            <person name="Daga R.R."/>
            <person name="Cruzado L."/>
            <person name="Jimenez J."/>
            <person name="Sanchez M."/>
            <person name="del Rey F."/>
            <person name="Benito J."/>
            <person name="Dominguez A."/>
            <person name="Revuelta J.L."/>
            <person name="Moreno S."/>
            <person name="Armstrong J."/>
            <person name="Forsburg S.L."/>
            <person name="Cerutti L."/>
            <person name="Lowe T."/>
            <person name="McCombie W.R."/>
            <person name="Paulsen I."/>
            <person name="Potashkin J."/>
            <person name="Shpakovski G.V."/>
            <person name="Ussery D."/>
            <person name="Barrell B.G."/>
            <person name="Nurse P."/>
        </authorList>
    </citation>
    <scope>NUCLEOTIDE SEQUENCE [LARGE SCALE GENOMIC DNA]</scope>
    <source>
        <strain>972 / ATCC 24843</strain>
    </source>
</reference>
<reference key="2">
    <citation type="journal article" date="2006" name="Nat. Biotechnol.">
        <title>ORFeome cloning and global analysis of protein localization in the fission yeast Schizosaccharomyces pombe.</title>
        <authorList>
            <person name="Matsuyama A."/>
            <person name="Arai R."/>
            <person name="Yashiroda Y."/>
            <person name="Shirai A."/>
            <person name="Kamata A."/>
            <person name="Sekido S."/>
            <person name="Kobayashi Y."/>
            <person name="Hashimoto A."/>
            <person name="Hamamoto M."/>
            <person name="Hiraoka Y."/>
            <person name="Horinouchi S."/>
            <person name="Yoshida M."/>
        </authorList>
    </citation>
    <scope>SUBCELLULAR LOCATION [LARGE SCALE ANALYSIS]</scope>
</reference>